<keyword id="KW-0328">Glycosyltransferase</keyword>
<keyword id="KW-0479">Metal-binding</keyword>
<keyword id="KW-0671">Queuosine biosynthesis</keyword>
<keyword id="KW-0808">Transferase</keyword>
<keyword id="KW-0819">tRNA processing</keyword>
<keyword id="KW-0862">Zinc</keyword>
<name>TGT_CLOBK</name>
<protein>
    <recommendedName>
        <fullName evidence="1">Queuine tRNA-ribosyltransferase</fullName>
        <ecNumber evidence="1">2.4.2.29</ecNumber>
    </recommendedName>
    <alternativeName>
        <fullName evidence="1">Guanine insertion enzyme</fullName>
    </alternativeName>
    <alternativeName>
        <fullName evidence="1">tRNA-guanine transglycosylase</fullName>
    </alternativeName>
</protein>
<evidence type="ECO:0000255" key="1">
    <source>
        <dbReference type="HAMAP-Rule" id="MF_00168"/>
    </source>
</evidence>
<accession>B1IMF1</accession>
<gene>
    <name evidence="1" type="primary">tgt</name>
    <name type="ordered locus">CLD_1472</name>
</gene>
<dbReference type="EC" id="2.4.2.29" evidence="1"/>
<dbReference type="EMBL" id="CP000939">
    <property type="protein sequence ID" value="ACA46018.1"/>
    <property type="molecule type" value="Genomic_DNA"/>
</dbReference>
<dbReference type="RefSeq" id="WP_003403621.1">
    <property type="nucleotide sequence ID" value="NC_010516.1"/>
</dbReference>
<dbReference type="SMR" id="B1IMF1"/>
<dbReference type="KEGG" id="cbb:CLD_1472"/>
<dbReference type="HOGENOM" id="CLU_022060_0_1_9"/>
<dbReference type="UniPathway" id="UPA00392"/>
<dbReference type="Proteomes" id="UP000008541">
    <property type="component" value="Chromosome"/>
</dbReference>
<dbReference type="GO" id="GO:0005829">
    <property type="term" value="C:cytosol"/>
    <property type="evidence" value="ECO:0007669"/>
    <property type="project" value="TreeGrafter"/>
</dbReference>
<dbReference type="GO" id="GO:0046872">
    <property type="term" value="F:metal ion binding"/>
    <property type="evidence" value="ECO:0007669"/>
    <property type="project" value="UniProtKB-KW"/>
</dbReference>
<dbReference type="GO" id="GO:0008479">
    <property type="term" value="F:tRNA-guanosine(34) queuine transglycosylase activity"/>
    <property type="evidence" value="ECO:0007669"/>
    <property type="project" value="UniProtKB-UniRule"/>
</dbReference>
<dbReference type="GO" id="GO:0008616">
    <property type="term" value="P:queuosine biosynthetic process"/>
    <property type="evidence" value="ECO:0007669"/>
    <property type="project" value="UniProtKB-UniRule"/>
</dbReference>
<dbReference type="GO" id="GO:0002099">
    <property type="term" value="P:tRNA wobble guanine modification"/>
    <property type="evidence" value="ECO:0007669"/>
    <property type="project" value="TreeGrafter"/>
</dbReference>
<dbReference type="GO" id="GO:0101030">
    <property type="term" value="P:tRNA-guanine transglycosylation"/>
    <property type="evidence" value="ECO:0007669"/>
    <property type="project" value="InterPro"/>
</dbReference>
<dbReference type="FunFam" id="3.20.20.105:FF:000001">
    <property type="entry name" value="Queuine tRNA-ribosyltransferase"/>
    <property type="match status" value="1"/>
</dbReference>
<dbReference type="Gene3D" id="3.20.20.105">
    <property type="entry name" value="Queuine tRNA-ribosyltransferase-like"/>
    <property type="match status" value="1"/>
</dbReference>
<dbReference type="HAMAP" id="MF_00168">
    <property type="entry name" value="Q_tRNA_Tgt"/>
    <property type="match status" value="1"/>
</dbReference>
<dbReference type="InterPro" id="IPR050076">
    <property type="entry name" value="ArchSynthase1/Queuine_TRR"/>
</dbReference>
<dbReference type="InterPro" id="IPR004803">
    <property type="entry name" value="TGT"/>
</dbReference>
<dbReference type="InterPro" id="IPR036511">
    <property type="entry name" value="TGT-like_sf"/>
</dbReference>
<dbReference type="InterPro" id="IPR002616">
    <property type="entry name" value="tRNA_ribo_trans-like"/>
</dbReference>
<dbReference type="NCBIfam" id="TIGR00430">
    <property type="entry name" value="Q_tRNA_tgt"/>
    <property type="match status" value="1"/>
</dbReference>
<dbReference type="NCBIfam" id="TIGR00449">
    <property type="entry name" value="tgt_general"/>
    <property type="match status" value="1"/>
</dbReference>
<dbReference type="PANTHER" id="PTHR46499">
    <property type="entry name" value="QUEUINE TRNA-RIBOSYLTRANSFERASE"/>
    <property type="match status" value="1"/>
</dbReference>
<dbReference type="PANTHER" id="PTHR46499:SF1">
    <property type="entry name" value="QUEUINE TRNA-RIBOSYLTRANSFERASE"/>
    <property type="match status" value="1"/>
</dbReference>
<dbReference type="Pfam" id="PF01702">
    <property type="entry name" value="TGT"/>
    <property type="match status" value="1"/>
</dbReference>
<dbReference type="SUPFAM" id="SSF51713">
    <property type="entry name" value="tRNA-guanine transglycosylase"/>
    <property type="match status" value="1"/>
</dbReference>
<feature type="chain" id="PRO_1000097536" description="Queuine tRNA-ribosyltransferase">
    <location>
        <begin position="1"/>
        <end position="376"/>
    </location>
</feature>
<feature type="region of interest" description="RNA binding" evidence="1">
    <location>
        <begin position="252"/>
        <end position="258"/>
    </location>
</feature>
<feature type="region of interest" description="RNA binding; important for wobble base 34 recognition" evidence="1">
    <location>
        <begin position="276"/>
        <end position="280"/>
    </location>
</feature>
<feature type="active site" description="Proton acceptor" evidence="1">
    <location>
        <position position="89"/>
    </location>
</feature>
<feature type="active site" description="Nucleophile" evidence="1">
    <location>
        <position position="271"/>
    </location>
</feature>
<feature type="binding site" evidence="1">
    <location>
        <begin position="89"/>
        <end position="93"/>
    </location>
    <ligand>
        <name>substrate</name>
    </ligand>
</feature>
<feature type="binding site" evidence="1">
    <location>
        <position position="143"/>
    </location>
    <ligand>
        <name>substrate</name>
    </ligand>
</feature>
<feature type="binding site" evidence="1">
    <location>
        <position position="194"/>
    </location>
    <ligand>
        <name>substrate</name>
    </ligand>
</feature>
<feature type="binding site" evidence="1">
    <location>
        <position position="221"/>
    </location>
    <ligand>
        <name>substrate</name>
    </ligand>
</feature>
<feature type="binding site" evidence="1">
    <location>
        <position position="309"/>
    </location>
    <ligand>
        <name>Zn(2+)</name>
        <dbReference type="ChEBI" id="CHEBI:29105"/>
    </ligand>
</feature>
<feature type="binding site" evidence="1">
    <location>
        <position position="311"/>
    </location>
    <ligand>
        <name>Zn(2+)</name>
        <dbReference type="ChEBI" id="CHEBI:29105"/>
    </ligand>
</feature>
<feature type="binding site" evidence="1">
    <location>
        <position position="314"/>
    </location>
    <ligand>
        <name>Zn(2+)</name>
        <dbReference type="ChEBI" id="CHEBI:29105"/>
    </ligand>
</feature>
<feature type="binding site" evidence="1">
    <location>
        <position position="340"/>
    </location>
    <ligand>
        <name>Zn(2+)</name>
        <dbReference type="ChEBI" id="CHEBI:29105"/>
    </ligand>
</feature>
<sequence length="376" mass="42912">MYKLLKKSGKARRGEFTTPHGVIQTPVFMNVGTLAAIKGAVSSMDLKEIGCQVELSNTYHLHLRPGDEVVKKMGGLHKFMNWDRPILTDSGGFQVFSLSKIRKIQEEGVYFNSHIDGRKIFMGPEESMRIQSNLASTIAMAFDECVENPAPREYVEKSVERTTRWLHRCKDEMNRLNSLPDTINNKQMLFGINQGGTYEDIRIEHAKTIAKMDLDGYAIGGLAVGESHEDMYRIIDAVVPHLPEDKPIYLMGVGIPSNILEAVDRGVDFFDCVLPARNGRHAHVFTKEGKINLLNAKFELDDKPIDEGCQCPACKHYTRSYIRHLFKAKEMLAMRLCVLHNLYFYNNLMEEIRDAIDGDYFKEYKERKLKEWGGRA</sequence>
<proteinExistence type="inferred from homology"/>
<comment type="function">
    <text evidence="1">Catalyzes the base-exchange of a guanine (G) residue with the queuine precursor 7-aminomethyl-7-deazaguanine (PreQ1) at position 34 (anticodon wobble position) in tRNAs with GU(N) anticodons (tRNA-Asp, -Asn, -His and -Tyr). Catalysis occurs through a double-displacement mechanism. The nucleophile active site attacks the C1' of nucleotide 34 to detach the guanine base from the RNA, forming a covalent enzyme-RNA intermediate. The proton acceptor active site deprotonates the incoming PreQ1, allowing a nucleophilic attack on the C1' of the ribose to form the product. After dissociation, two additional enzymatic reactions on the tRNA convert PreQ1 to queuine (Q), resulting in the hypermodified nucleoside queuosine (7-(((4,5-cis-dihydroxy-2-cyclopenten-1-yl)amino)methyl)-7-deazaguanosine).</text>
</comment>
<comment type="catalytic activity">
    <reaction evidence="1">
        <text>7-aminomethyl-7-carbaguanine + guanosine(34) in tRNA = 7-aminomethyl-7-carbaguanosine(34) in tRNA + guanine</text>
        <dbReference type="Rhea" id="RHEA:24104"/>
        <dbReference type="Rhea" id="RHEA-COMP:10341"/>
        <dbReference type="Rhea" id="RHEA-COMP:10342"/>
        <dbReference type="ChEBI" id="CHEBI:16235"/>
        <dbReference type="ChEBI" id="CHEBI:58703"/>
        <dbReference type="ChEBI" id="CHEBI:74269"/>
        <dbReference type="ChEBI" id="CHEBI:82833"/>
        <dbReference type="EC" id="2.4.2.29"/>
    </reaction>
</comment>
<comment type="cofactor">
    <cofactor evidence="1">
        <name>Zn(2+)</name>
        <dbReference type="ChEBI" id="CHEBI:29105"/>
    </cofactor>
    <text evidence="1">Binds 1 zinc ion per subunit.</text>
</comment>
<comment type="pathway">
    <text evidence="1">tRNA modification; tRNA-queuosine biosynthesis.</text>
</comment>
<comment type="subunit">
    <text evidence="1">Homodimer. Within each dimer, one monomer is responsible for RNA recognition and catalysis, while the other monomer binds to the replacement base PreQ1.</text>
</comment>
<comment type="similarity">
    <text evidence="1">Belongs to the queuine tRNA-ribosyltransferase family.</text>
</comment>
<organism>
    <name type="scientific">Clostridium botulinum (strain Okra / Type B1)</name>
    <dbReference type="NCBI Taxonomy" id="498213"/>
    <lineage>
        <taxon>Bacteria</taxon>
        <taxon>Bacillati</taxon>
        <taxon>Bacillota</taxon>
        <taxon>Clostridia</taxon>
        <taxon>Eubacteriales</taxon>
        <taxon>Clostridiaceae</taxon>
        <taxon>Clostridium</taxon>
    </lineage>
</organism>
<reference key="1">
    <citation type="journal article" date="2007" name="PLoS ONE">
        <title>Analysis of the neurotoxin complex genes in Clostridium botulinum A1-A4 and B1 strains: BoNT/A3, /Ba4 and /B1 clusters are located within plasmids.</title>
        <authorList>
            <person name="Smith T.J."/>
            <person name="Hill K.K."/>
            <person name="Foley B.T."/>
            <person name="Detter J.C."/>
            <person name="Munk A.C."/>
            <person name="Bruce D.C."/>
            <person name="Doggett N.A."/>
            <person name="Smith L.A."/>
            <person name="Marks J.D."/>
            <person name="Xie G."/>
            <person name="Brettin T.S."/>
        </authorList>
    </citation>
    <scope>NUCLEOTIDE SEQUENCE [LARGE SCALE GENOMIC DNA]</scope>
    <source>
        <strain>Okra / Type B1</strain>
    </source>
</reference>